<feature type="chain" id="PRO_1000148971" description="1-(5-phosphoribosyl)-5-[(5-phosphoribosylamino)methylideneamino] imidazole-4-carboxamide isomerase">
    <location>
        <begin position="1"/>
        <end position="245"/>
    </location>
</feature>
<feature type="active site" description="Proton acceptor" evidence="1">
    <location>
        <position position="7"/>
    </location>
</feature>
<feature type="active site" description="Proton donor" evidence="1">
    <location>
        <position position="129"/>
    </location>
</feature>
<keyword id="KW-0028">Amino-acid biosynthesis</keyword>
<keyword id="KW-0963">Cytoplasm</keyword>
<keyword id="KW-0368">Histidine biosynthesis</keyword>
<keyword id="KW-0413">Isomerase</keyword>
<keyword id="KW-1185">Reference proteome</keyword>
<proteinExistence type="inferred from homology"/>
<name>HIS4_ECO55</name>
<gene>
    <name evidence="1" type="primary">hisA</name>
    <name type="ordered locus">EC55989_2283</name>
</gene>
<evidence type="ECO:0000255" key="1">
    <source>
        <dbReference type="HAMAP-Rule" id="MF_01014"/>
    </source>
</evidence>
<organism>
    <name type="scientific">Escherichia coli (strain 55989 / EAEC)</name>
    <dbReference type="NCBI Taxonomy" id="585055"/>
    <lineage>
        <taxon>Bacteria</taxon>
        <taxon>Pseudomonadati</taxon>
        <taxon>Pseudomonadota</taxon>
        <taxon>Gammaproteobacteria</taxon>
        <taxon>Enterobacterales</taxon>
        <taxon>Enterobacteriaceae</taxon>
        <taxon>Escherichia</taxon>
    </lineage>
</organism>
<accession>B7L9Q1</accession>
<comment type="catalytic activity">
    <reaction evidence="1">
        <text>1-(5-phospho-beta-D-ribosyl)-5-[(5-phospho-beta-D-ribosylamino)methylideneamino]imidazole-4-carboxamide = 5-[(5-phospho-1-deoxy-D-ribulos-1-ylimino)methylamino]-1-(5-phospho-beta-D-ribosyl)imidazole-4-carboxamide</text>
        <dbReference type="Rhea" id="RHEA:15469"/>
        <dbReference type="ChEBI" id="CHEBI:58435"/>
        <dbReference type="ChEBI" id="CHEBI:58525"/>
        <dbReference type="EC" id="5.3.1.16"/>
    </reaction>
</comment>
<comment type="pathway">
    <text evidence="1">Amino-acid biosynthesis; L-histidine biosynthesis; L-histidine from 5-phospho-alpha-D-ribose 1-diphosphate: step 4/9.</text>
</comment>
<comment type="subcellular location">
    <subcellularLocation>
        <location evidence="1">Cytoplasm</location>
    </subcellularLocation>
</comment>
<comment type="similarity">
    <text evidence="1">Belongs to the HisA/HisF family.</text>
</comment>
<protein>
    <recommendedName>
        <fullName evidence="1">1-(5-phosphoribosyl)-5-[(5-phosphoribosylamino)methylideneamino] imidazole-4-carboxamide isomerase</fullName>
        <ecNumber evidence="1">5.3.1.16</ecNumber>
    </recommendedName>
    <alternativeName>
        <fullName evidence="1">Phosphoribosylformimino-5-aminoimidazole carboxamide ribotide isomerase</fullName>
    </alternativeName>
</protein>
<dbReference type="EC" id="5.3.1.16" evidence="1"/>
<dbReference type="EMBL" id="CU928145">
    <property type="protein sequence ID" value="CAU98156.1"/>
    <property type="molecule type" value="Genomic_DNA"/>
</dbReference>
<dbReference type="RefSeq" id="WP_000586456.1">
    <property type="nucleotide sequence ID" value="NC_011748.1"/>
</dbReference>
<dbReference type="SMR" id="B7L9Q1"/>
<dbReference type="KEGG" id="eck:EC55989_2283"/>
<dbReference type="HOGENOM" id="CLU_048577_1_2_6"/>
<dbReference type="UniPathway" id="UPA00031">
    <property type="reaction ID" value="UER00009"/>
</dbReference>
<dbReference type="Proteomes" id="UP000000746">
    <property type="component" value="Chromosome"/>
</dbReference>
<dbReference type="GO" id="GO:0005737">
    <property type="term" value="C:cytoplasm"/>
    <property type="evidence" value="ECO:0007669"/>
    <property type="project" value="UniProtKB-SubCell"/>
</dbReference>
<dbReference type="GO" id="GO:0003949">
    <property type="term" value="F:1-(5-phosphoribosyl)-5-[(5-phosphoribosylamino)methylideneamino]imidazole-4-carboxamide isomerase activity"/>
    <property type="evidence" value="ECO:0007669"/>
    <property type="project" value="UniProtKB-UniRule"/>
</dbReference>
<dbReference type="GO" id="GO:0000105">
    <property type="term" value="P:L-histidine biosynthetic process"/>
    <property type="evidence" value="ECO:0007669"/>
    <property type="project" value="UniProtKB-UniRule"/>
</dbReference>
<dbReference type="GO" id="GO:0000162">
    <property type="term" value="P:L-tryptophan biosynthetic process"/>
    <property type="evidence" value="ECO:0007669"/>
    <property type="project" value="TreeGrafter"/>
</dbReference>
<dbReference type="CDD" id="cd04732">
    <property type="entry name" value="HisA"/>
    <property type="match status" value="1"/>
</dbReference>
<dbReference type="FunFam" id="3.20.20.70:FF:000009">
    <property type="entry name" value="1-(5-phosphoribosyl)-5-[(5-phosphoribosylamino)methylideneamino] imidazole-4-carboxamide isomerase"/>
    <property type="match status" value="1"/>
</dbReference>
<dbReference type="Gene3D" id="3.20.20.70">
    <property type="entry name" value="Aldolase class I"/>
    <property type="match status" value="1"/>
</dbReference>
<dbReference type="HAMAP" id="MF_01014">
    <property type="entry name" value="HisA"/>
    <property type="match status" value="1"/>
</dbReference>
<dbReference type="InterPro" id="IPR013785">
    <property type="entry name" value="Aldolase_TIM"/>
</dbReference>
<dbReference type="InterPro" id="IPR006062">
    <property type="entry name" value="His_biosynth"/>
</dbReference>
<dbReference type="InterPro" id="IPR006063">
    <property type="entry name" value="HisA_bact_arch"/>
</dbReference>
<dbReference type="InterPro" id="IPR044524">
    <property type="entry name" value="Isoase_HisA-like"/>
</dbReference>
<dbReference type="InterPro" id="IPR023016">
    <property type="entry name" value="Isoase_HisA-like_bact"/>
</dbReference>
<dbReference type="InterPro" id="IPR011060">
    <property type="entry name" value="RibuloseP-bd_barrel"/>
</dbReference>
<dbReference type="NCBIfam" id="TIGR00007">
    <property type="entry name" value="1-(5-phosphoribosyl)-5-[(5-phosphoribosylamino)methylideneamino]imidazole-4-carboxamide isomerase"/>
    <property type="match status" value="1"/>
</dbReference>
<dbReference type="PANTHER" id="PTHR43090">
    <property type="entry name" value="1-(5-PHOSPHORIBOSYL)-5-[(5-PHOSPHORIBOSYLAMINO)METHYLIDENEAMINO] IMIDAZOLE-4-CARBOXAMIDE ISOMERASE"/>
    <property type="match status" value="1"/>
</dbReference>
<dbReference type="PANTHER" id="PTHR43090:SF2">
    <property type="entry name" value="1-(5-PHOSPHORIBOSYL)-5-[(5-PHOSPHORIBOSYLAMINO)METHYLIDENEAMINO] IMIDAZOLE-4-CARBOXAMIDE ISOMERASE"/>
    <property type="match status" value="1"/>
</dbReference>
<dbReference type="Pfam" id="PF00977">
    <property type="entry name" value="His_biosynth"/>
    <property type="match status" value="1"/>
</dbReference>
<dbReference type="SUPFAM" id="SSF51366">
    <property type="entry name" value="Ribulose-phoshate binding barrel"/>
    <property type="match status" value="1"/>
</dbReference>
<sequence length="245" mass="26074">MIIPALDLIDGTVVRLHQGDYGKQRDYGNDPLPRLQDYAAQGAEVLHLVDLTGAKDPAKRQIPLIKTLVAGVNVPVQVGGGVRSEEDVAALLEAGVARVVVGSTAVKSPEMVKGWFERFGTDALVLALDVRIDEQGNKQVAVSGWQENSGVSLEQLVETYLPVGLKHVLCTDISRDGTLAGSNVSLYEEVCARYPQVAFQSSGGIGDIDDVAALRGTGVRGVIVGRALLEGKFTVKEAIACWQNV</sequence>
<reference key="1">
    <citation type="journal article" date="2009" name="PLoS Genet.">
        <title>Organised genome dynamics in the Escherichia coli species results in highly diverse adaptive paths.</title>
        <authorList>
            <person name="Touchon M."/>
            <person name="Hoede C."/>
            <person name="Tenaillon O."/>
            <person name="Barbe V."/>
            <person name="Baeriswyl S."/>
            <person name="Bidet P."/>
            <person name="Bingen E."/>
            <person name="Bonacorsi S."/>
            <person name="Bouchier C."/>
            <person name="Bouvet O."/>
            <person name="Calteau A."/>
            <person name="Chiapello H."/>
            <person name="Clermont O."/>
            <person name="Cruveiller S."/>
            <person name="Danchin A."/>
            <person name="Diard M."/>
            <person name="Dossat C."/>
            <person name="Karoui M.E."/>
            <person name="Frapy E."/>
            <person name="Garry L."/>
            <person name="Ghigo J.M."/>
            <person name="Gilles A.M."/>
            <person name="Johnson J."/>
            <person name="Le Bouguenec C."/>
            <person name="Lescat M."/>
            <person name="Mangenot S."/>
            <person name="Martinez-Jehanne V."/>
            <person name="Matic I."/>
            <person name="Nassif X."/>
            <person name="Oztas S."/>
            <person name="Petit M.A."/>
            <person name="Pichon C."/>
            <person name="Rouy Z."/>
            <person name="Ruf C.S."/>
            <person name="Schneider D."/>
            <person name="Tourret J."/>
            <person name="Vacherie B."/>
            <person name="Vallenet D."/>
            <person name="Medigue C."/>
            <person name="Rocha E.P.C."/>
            <person name="Denamur E."/>
        </authorList>
    </citation>
    <scope>NUCLEOTIDE SEQUENCE [LARGE SCALE GENOMIC DNA]</scope>
    <source>
        <strain>55989 / EAEC</strain>
    </source>
</reference>